<evidence type="ECO:0000250" key="1"/>
<evidence type="ECO:0000255" key="2"/>
<evidence type="ECO:0000256" key="3">
    <source>
        <dbReference type="SAM" id="MobiDB-lite"/>
    </source>
</evidence>
<evidence type="ECO:0000305" key="4"/>
<gene>
    <name type="primary">exo84</name>
    <name type="ORF">AFUA_6G11370</name>
</gene>
<keyword id="KW-0175">Coiled coil</keyword>
<keyword id="KW-0968">Cytoplasmic vesicle</keyword>
<keyword id="KW-0268">Exocytosis</keyword>
<keyword id="KW-0653">Protein transport</keyword>
<keyword id="KW-1185">Reference proteome</keyword>
<keyword id="KW-0813">Transport</keyword>
<proteinExistence type="inferred from homology"/>
<dbReference type="EMBL" id="AAHF01000006">
    <property type="protein sequence ID" value="EAL88982.1"/>
    <property type="molecule type" value="Genomic_DNA"/>
</dbReference>
<dbReference type="RefSeq" id="XP_751020.1">
    <property type="nucleotide sequence ID" value="XM_745927.1"/>
</dbReference>
<dbReference type="SMR" id="Q4WM32"/>
<dbReference type="FunCoup" id="Q4WM32">
    <property type="interactions" value="178"/>
</dbReference>
<dbReference type="STRING" id="330879.Q4WM32"/>
<dbReference type="EnsemblFungi" id="EAL88982">
    <property type="protein sequence ID" value="EAL88982"/>
    <property type="gene ID" value="AFUA_6G11370"/>
</dbReference>
<dbReference type="GeneID" id="3508325"/>
<dbReference type="KEGG" id="afm:AFUA_6G11370"/>
<dbReference type="eggNOG" id="KOG2215">
    <property type="taxonomic scope" value="Eukaryota"/>
</dbReference>
<dbReference type="HOGENOM" id="CLU_012488_2_0_1"/>
<dbReference type="InParanoid" id="Q4WM32"/>
<dbReference type="OMA" id="AAWLPNR"/>
<dbReference type="OrthoDB" id="642193at2759"/>
<dbReference type="Proteomes" id="UP000002530">
    <property type="component" value="Chromosome 6"/>
</dbReference>
<dbReference type="GO" id="GO:0000145">
    <property type="term" value="C:exocyst"/>
    <property type="evidence" value="ECO:0000318"/>
    <property type="project" value="GO_Central"/>
</dbReference>
<dbReference type="GO" id="GO:0030133">
    <property type="term" value="C:transport vesicle"/>
    <property type="evidence" value="ECO:0007669"/>
    <property type="project" value="UniProtKB-SubCell"/>
</dbReference>
<dbReference type="GO" id="GO:0006887">
    <property type="term" value="P:exocytosis"/>
    <property type="evidence" value="ECO:0007669"/>
    <property type="project" value="UniProtKB-KW"/>
</dbReference>
<dbReference type="GO" id="GO:0006893">
    <property type="term" value="P:Golgi to plasma membrane transport"/>
    <property type="evidence" value="ECO:0000318"/>
    <property type="project" value="GO_Central"/>
</dbReference>
<dbReference type="GO" id="GO:0008104">
    <property type="term" value="P:protein localization"/>
    <property type="evidence" value="ECO:0000318"/>
    <property type="project" value="GO_Central"/>
</dbReference>
<dbReference type="GO" id="GO:0015031">
    <property type="term" value="P:protein transport"/>
    <property type="evidence" value="ECO:0007669"/>
    <property type="project" value="UniProtKB-KW"/>
</dbReference>
<dbReference type="FunFam" id="1.20.58.1210:FF:000003">
    <property type="entry name" value="Exocyst complex component EXO84"/>
    <property type="match status" value="1"/>
</dbReference>
<dbReference type="FunFam" id="1.20.58.1220:FF:000004">
    <property type="entry name" value="Exocyst complex component Exo84, putative"/>
    <property type="match status" value="1"/>
</dbReference>
<dbReference type="FunFam" id="2.30.29.30:FF:000264">
    <property type="entry name" value="Potential exocyst complex component Exo84"/>
    <property type="match status" value="1"/>
</dbReference>
<dbReference type="Gene3D" id="1.20.58.1220">
    <property type="entry name" value="Exo84p, C-terminal helical domain"/>
    <property type="match status" value="1"/>
</dbReference>
<dbReference type="Gene3D" id="1.20.58.1210">
    <property type="entry name" value="Exo84p, N-terminal helical domain"/>
    <property type="match status" value="1"/>
</dbReference>
<dbReference type="Gene3D" id="2.30.29.30">
    <property type="entry name" value="Pleckstrin-homology domain (PH domain)/Phosphotyrosine-binding domain (PTB)"/>
    <property type="match status" value="1"/>
</dbReference>
<dbReference type="InterPro" id="IPR016159">
    <property type="entry name" value="Cullin_repeat-like_dom_sf"/>
</dbReference>
<dbReference type="InterPro" id="IPR033961">
    <property type="entry name" value="Exo84"/>
</dbReference>
<dbReference type="InterPro" id="IPR032403">
    <property type="entry name" value="Exo84_C"/>
</dbReference>
<dbReference type="InterPro" id="IPR042561">
    <property type="entry name" value="Exo84_C_1"/>
</dbReference>
<dbReference type="InterPro" id="IPR042560">
    <property type="entry name" value="Exo84_C_2"/>
</dbReference>
<dbReference type="InterPro" id="IPR011993">
    <property type="entry name" value="PH-like_dom_sf"/>
</dbReference>
<dbReference type="PANTHER" id="PTHR21426">
    <property type="entry name" value="EXOCYST COMPLEX COMPONENT 8"/>
    <property type="match status" value="1"/>
</dbReference>
<dbReference type="PANTHER" id="PTHR21426:SF12">
    <property type="entry name" value="EXOCYST COMPLEX COMPONENT 8"/>
    <property type="match status" value="1"/>
</dbReference>
<dbReference type="Pfam" id="PF16528">
    <property type="entry name" value="Exo84_C"/>
    <property type="match status" value="1"/>
</dbReference>
<dbReference type="Pfam" id="PF25345">
    <property type="entry name" value="PH_EXO84"/>
    <property type="match status" value="1"/>
</dbReference>
<dbReference type="Pfam" id="PF08700">
    <property type="entry name" value="VPS51_Exo84_N"/>
    <property type="match status" value="1"/>
</dbReference>
<dbReference type="SUPFAM" id="SSF74788">
    <property type="entry name" value="Cullin repeat-like"/>
    <property type="match status" value="1"/>
</dbReference>
<dbReference type="SUPFAM" id="SSF50729">
    <property type="entry name" value="PH domain-like"/>
    <property type="match status" value="1"/>
</dbReference>
<comment type="function">
    <text evidence="1">Involved in the secretory pathway as part of the exocyst complex which tethers secretory vesicles to the sites of exocytosis. Plays a role in both the assembly of the exocyst and the polarization of this complex to specific sites of the plasma membrane for exocytosis. Also involved in assembly of the spliceosome (By similarity).</text>
</comment>
<comment type="subunit">
    <text evidence="1">Component of the exocyst complex.</text>
</comment>
<comment type="subcellular location">
    <subcellularLocation>
        <location evidence="1">Cytoplasmic vesicle</location>
        <location evidence="1">Secretory vesicle</location>
    </subcellularLocation>
    <text evidence="1">Cell periphery. The polarization of EXO84 requires actin cables (By similarity).</text>
</comment>
<comment type="similarity">
    <text evidence="4">Belongs to the EXO84 family.</text>
</comment>
<sequence>MESRGLTLRSRTRRARPQISAPKPISGPLPPNSKSTDSGQGNNVSQAVSRERIPTNGATSDLVKRRYSTRYNQAPEFDASAPPVPGLPAAASKYGGLGPPEASKKPSSDSSGPPQVDLNALRDPSLPVDRSNLLANATEEEIEEYQNNLRKVRNRTSTDLQQNVYQNRTQFIKISKEAEKLKGEMRTLRTLMAELTTALGQTAIGNAPNPMSPTADDWVPKRNANRSSVANLESMWNVQLQTLWKTVEGSQKFLPVAPGRHIVMETGQWVELDSATWKPRRPVHIVLLNDHLLVAAKKRKRVDASNHRGPVPTKLVAEECWPLQDVDMIDLGANMGTGAAREEAEERGIANAINVRVGSKTFTYRHDKRDSSDKGELLATFRKAVEDLRRTLRSESDTAIKPTDGFGYAGVKHSVSQKLDLNASDASRDKPEVRIDVDGKQQNLRWVDGQVDELDIDIALQRFEEAVSGIERLRKLARGLKGNSYAQQIINSKVDERAARLASVLSRALADTHSFLNATKTNVTWLTRLGFEDQAREAYLKARSDVISKRVRACVFEGDLPLYIFQVSYVYFTLIKNTINIYQQCFPAVLTSACIKWAKHHLDGFNALLTRQLSSVQRGTTVWQKCIDIVHEHADSLTEVGVDFVDLVAKGLDLHDNGGEKPQMTRSESLISGLADAARDHAF</sequence>
<protein>
    <recommendedName>
        <fullName>Exocyst complex component exo84</fullName>
    </recommendedName>
</protein>
<feature type="chain" id="PRO_0000118977" description="Exocyst complex component exo84">
    <location>
        <begin position="1"/>
        <end position="683"/>
    </location>
</feature>
<feature type="region of interest" description="Disordered" evidence="3">
    <location>
        <begin position="1"/>
        <end position="128"/>
    </location>
</feature>
<feature type="coiled-coil region" evidence="2">
    <location>
        <begin position="128"/>
        <end position="199"/>
    </location>
</feature>
<feature type="compositionally biased region" description="Polar residues" evidence="3">
    <location>
        <begin position="32"/>
        <end position="48"/>
    </location>
</feature>
<organism>
    <name type="scientific">Aspergillus fumigatus (strain ATCC MYA-4609 / CBS 101355 / FGSC A1100 / Af293)</name>
    <name type="common">Neosartorya fumigata</name>
    <dbReference type="NCBI Taxonomy" id="330879"/>
    <lineage>
        <taxon>Eukaryota</taxon>
        <taxon>Fungi</taxon>
        <taxon>Dikarya</taxon>
        <taxon>Ascomycota</taxon>
        <taxon>Pezizomycotina</taxon>
        <taxon>Eurotiomycetes</taxon>
        <taxon>Eurotiomycetidae</taxon>
        <taxon>Eurotiales</taxon>
        <taxon>Aspergillaceae</taxon>
        <taxon>Aspergillus</taxon>
        <taxon>Aspergillus subgen. Fumigati</taxon>
    </lineage>
</organism>
<name>EXO84_ASPFU</name>
<accession>Q4WM32</accession>
<reference key="1">
    <citation type="journal article" date="2005" name="Nature">
        <title>Genomic sequence of the pathogenic and allergenic filamentous fungus Aspergillus fumigatus.</title>
        <authorList>
            <person name="Nierman W.C."/>
            <person name="Pain A."/>
            <person name="Anderson M.J."/>
            <person name="Wortman J.R."/>
            <person name="Kim H.S."/>
            <person name="Arroyo J."/>
            <person name="Berriman M."/>
            <person name="Abe K."/>
            <person name="Archer D.B."/>
            <person name="Bermejo C."/>
            <person name="Bennett J.W."/>
            <person name="Bowyer P."/>
            <person name="Chen D."/>
            <person name="Collins M."/>
            <person name="Coulsen R."/>
            <person name="Davies R."/>
            <person name="Dyer P.S."/>
            <person name="Farman M.L."/>
            <person name="Fedorova N."/>
            <person name="Fedorova N.D."/>
            <person name="Feldblyum T.V."/>
            <person name="Fischer R."/>
            <person name="Fosker N."/>
            <person name="Fraser A."/>
            <person name="Garcia J.L."/>
            <person name="Garcia M.J."/>
            <person name="Goble A."/>
            <person name="Goldman G.H."/>
            <person name="Gomi K."/>
            <person name="Griffith-Jones S."/>
            <person name="Gwilliam R."/>
            <person name="Haas B.J."/>
            <person name="Haas H."/>
            <person name="Harris D.E."/>
            <person name="Horiuchi H."/>
            <person name="Huang J."/>
            <person name="Humphray S."/>
            <person name="Jimenez J."/>
            <person name="Keller N."/>
            <person name="Khouri H."/>
            <person name="Kitamoto K."/>
            <person name="Kobayashi T."/>
            <person name="Konzack S."/>
            <person name="Kulkarni R."/>
            <person name="Kumagai T."/>
            <person name="Lafton A."/>
            <person name="Latge J.-P."/>
            <person name="Li W."/>
            <person name="Lord A."/>
            <person name="Lu C."/>
            <person name="Majoros W.H."/>
            <person name="May G.S."/>
            <person name="Miller B.L."/>
            <person name="Mohamoud Y."/>
            <person name="Molina M."/>
            <person name="Monod M."/>
            <person name="Mouyna I."/>
            <person name="Mulligan S."/>
            <person name="Murphy L.D."/>
            <person name="O'Neil S."/>
            <person name="Paulsen I."/>
            <person name="Penalva M.A."/>
            <person name="Pertea M."/>
            <person name="Price C."/>
            <person name="Pritchard B.L."/>
            <person name="Quail M.A."/>
            <person name="Rabbinowitsch E."/>
            <person name="Rawlins N."/>
            <person name="Rajandream M.A."/>
            <person name="Reichard U."/>
            <person name="Renauld H."/>
            <person name="Robson G.D."/>
            <person name="Rodriguez de Cordoba S."/>
            <person name="Rodriguez-Pena J.M."/>
            <person name="Ronning C.M."/>
            <person name="Rutter S."/>
            <person name="Salzberg S.L."/>
            <person name="Sanchez M."/>
            <person name="Sanchez-Ferrero J.C."/>
            <person name="Saunders D."/>
            <person name="Seeger K."/>
            <person name="Squares R."/>
            <person name="Squares S."/>
            <person name="Takeuchi M."/>
            <person name="Tekaia F."/>
            <person name="Turner G."/>
            <person name="Vazquez de Aldana C.R."/>
            <person name="Weidman J."/>
            <person name="White O."/>
            <person name="Woodward J.R."/>
            <person name="Yu J.-H."/>
            <person name="Fraser C.M."/>
            <person name="Galagan J.E."/>
            <person name="Asai K."/>
            <person name="Machida M."/>
            <person name="Hall N."/>
            <person name="Barrell B.G."/>
            <person name="Denning D.W."/>
        </authorList>
    </citation>
    <scope>NUCLEOTIDE SEQUENCE [LARGE SCALE GENOMIC DNA]</scope>
    <source>
        <strain>ATCC MYA-4609 / CBS 101355 / FGSC A1100 / Af293</strain>
    </source>
</reference>